<name>RS11_SYNE7</name>
<accession>Q31L29</accession>
<organism>
    <name type="scientific">Synechococcus elongatus (strain ATCC 33912 / PCC 7942 / FACHB-805)</name>
    <name type="common">Anacystis nidulans R2</name>
    <dbReference type="NCBI Taxonomy" id="1140"/>
    <lineage>
        <taxon>Bacteria</taxon>
        <taxon>Bacillati</taxon>
        <taxon>Cyanobacteriota</taxon>
        <taxon>Cyanophyceae</taxon>
        <taxon>Synechococcales</taxon>
        <taxon>Synechococcaceae</taxon>
        <taxon>Synechococcus</taxon>
    </lineage>
</organism>
<keyword id="KW-1185">Reference proteome</keyword>
<keyword id="KW-0687">Ribonucleoprotein</keyword>
<keyword id="KW-0689">Ribosomal protein</keyword>
<keyword id="KW-0694">RNA-binding</keyword>
<keyword id="KW-0699">rRNA-binding</keyword>
<comment type="function">
    <text evidence="1">Located on the platform of the 30S subunit, it bridges several disparate RNA helices of the 16S rRNA. Forms part of the Shine-Dalgarno cleft in the 70S ribosome.</text>
</comment>
<comment type="subunit">
    <text evidence="1">Part of the 30S ribosomal subunit. Interacts with proteins S7 and S18. Binds to IF-3.</text>
</comment>
<comment type="similarity">
    <text evidence="1">Belongs to the universal ribosomal protein uS11 family.</text>
</comment>
<dbReference type="EMBL" id="CP000100">
    <property type="protein sequence ID" value="ABB58240.1"/>
    <property type="molecule type" value="Genomic_DNA"/>
</dbReference>
<dbReference type="RefSeq" id="WP_011244197.1">
    <property type="nucleotide sequence ID" value="NZ_JACJTX010000001.1"/>
</dbReference>
<dbReference type="SMR" id="Q31L29"/>
<dbReference type="STRING" id="1140.Synpcc7942_2210"/>
<dbReference type="PaxDb" id="1140-Synpcc7942_2210"/>
<dbReference type="GeneID" id="72431093"/>
<dbReference type="KEGG" id="syf:Synpcc7942_2210"/>
<dbReference type="eggNOG" id="COG0100">
    <property type="taxonomic scope" value="Bacteria"/>
</dbReference>
<dbReference type="HOGENOM" id="CLU_072439_5_0_3"/>
<dbReference type="OrthoDB" id="9806415at2"/>
<dbReference type="BioCyc" id="SYNEL:SYNPCC7942_2210-MONOMER"/>
<dbReference type="Proteomes" id="UP000889800">
    <property type="component" value="Chromosome"/>
</dbReference>
<dbReference type="GO" id="GO:1990904">
    <property type="term" value="C:ribonucleoprotein complex"/>
    <property type="evidence" value="ECO:0007669"/>
    <property type="project" value="UniProtKB-KW"/>
</dbReference>
<dbReference type="GO" id="GO:0005840">
    <property type="term" value="C:ribosome"/>
    <property type="evidence" value="ECO:0007669"/>
    <property type="project" value="UniProtKB-KW"/>
</dbReference>
<dbReference type="GO" id="GO:0019843">
    <property type="term" value="F:rRNA binding"/>
    <property type="evidence" value="ECO:0007669"/>
    <property type="project" value="UniProtKB-UniRule"/>
</dbReference>
<dbReference type="GO" id="GO:0003735">
    <property type="term" value="F:structural constituent of ribosome"/>
    <property type="evidence" value="ECO:0007669"/>
    <property type="project" value="InterPro"/>
</dbReference>
<dbReference type="GO" id="GO:0006412">
    <property type="term" value="P:translation"/>
    <property type="evidence" value="ECO:0007669"/>
    <property type="project" value="UniProtKB-UniRule"/>
</dbReference>
<dbReference type="FunFam" id="3.30.420.80:FF:000001">
    <property type="entry name" value="30S ribosomal protein S11"/>
    <property type="match status" value="1"/>
</dbReference>
<dbReference type="Gene3D" id="3.30.420.80">
    <property type="entry name" value="Ribosomal protein S11"/>
    <property type="match status" value="1"/>
</dbReference>
<dbReference type="HAMAP" id="MF_01310">
    <property type="entry name" value="Ribosomal_uS11"/>
    <property type="match status" value="1"/>
</dbReference>
<dbReference type="InterPro" id="IPR001971">
    <property type="entry name" value="Ribosomal_uS11"/>
</dbReference>
<dbReference type="InterPro" id="IPR019981">
    <property type="entry name" value="Ribosomal_uS11_bac-type"/>
</dbReference>
<dbReference type="InterPro" id="IPR018102">
    <property type="entry name" value="Ribosomal_uS11_CS"/>
</dbReference>
<dbReference type="InterPro" id="IPR036967">
    <property type="entry name" value="Ribosomal_uS11_sf"/>
</dbReference>
<dbReference type="NCBIfam" id="NF003698">
    <property type="entry name" value="PRK05309.1"/>
    <property type="match status" value="1"/>
</dbReference>
<dbReference type="NCBIfam" id="TIGR03632">
    <property type="entry name" value="uS11_bact"/>
    <property type="match status" value="1"/>
</dbReference>
<dbReference type="PANTHER" id="PTHR11759">
    <property type="entry name" value="40S RIBOSOMAL PROTEIN S14/30S RIBOSOMAL PROTEIN S11"/>
    <property type="match status" value="1"/>
</dbReference>
<dbReference type="Pfam" id="PF00411">
    <property type="entry name" value="Ribosomal_S11"/>
    <property type="match status" value="1"/>
</dbReference>
<dbReference type="PIRSF" id="PIRSF002131">
    <property type="entry name" value="Ribosomal_S11"/>
    <property type="match status" value="1"/>
</dbReference>
<dbReference type="SUPFAM" id="SSF53137">
    <property type="entry name" value="Translational machinery components"/>
    <property type="match status" value="1"/>
</dbReference>
<dbReference type="PROSITE" id="PS00054">
    <property type="entry name" value="RIBOSOMAL_S11"/>
    <property type="match status" value="1"/>
</dbReference>
<evidence type="ECO:0000255" key="1">
    <source>
        <dbReference type="HAMAP-Rule" id="MF_01310"/>
    </source>
</evidence>
<evidence type="ECO:0000256" key="2">
    <source>
        <dbReference type="SAM" id="MobiDB-lite"/>
    </source>
</evidence>
<evidence type="ECO:0000305" key="3"/>
<reference key="1">
    <citation type="submission" date="2005-08" db="EMBL/GenBank/DDBJ databases">
        <title>Complete sequence of chromosome 1 of Synechococcus elongatus PCC 7942.</title>
        <authorList>
            <consortium name="US DOE Joint Genome Institute"/>
            <person name="Copeland A."/>
            <person name="Lucas S."/>
            <person name="Lapidus A."/>
            <person name="Barry K."/>
            <person name="Detter J.C."/>
            <person name="Glavina T."/>
            <person name="Hammon N."/>
            <person name="Israni S."/>
            <person name="Pitluck S."/>
            <person name="Schmutz J."/>
            <person name="Larimer F."/>
            <person name="Land M."/>
            <person name="Kyrpides N."/>
            <person name="Lykidis A."/>
            <person name="Golden S."/>
            <person name="Richardson P."/>
        </authorList>
    </citation>
    <scope>NUCLEOTIDE SEQUENCE [LARGE SCALE GENOMIC DNA]</scope>
    <source>
        <strain>ATCC 33912 / PCC 7942 / FACHB-805</strain>
    </source>
</reference>
<gene>
    <name evidence="1" type="primary">rpsK</name>
    <name evidence="1" type="synonym">rps11</name>
    <name type="ordered locus">Synpcc7942_2210</name>
</gene>
<proteinExistence type="inferred from homology"/>
<protein>
    <recommendedName>
        <fullName evidence="1">Small ribosomal subunit protein uS11</fullName>
    </recommendedName>
    <alternativeName>
        <fullName evidence="3">30S ribosomal protein S11</fullName>
    </alternativeName>
</protein>
<feature type="chain" id="PRO_0000294878" description="Small ribosomal subunit protein uS11">
    <location>
        <begin position="1"/>
        <end position="130"/>
    </location>
</feature>
<feature type="region of interest" description="Disordered" evidence="2">
    <location>
        <begin position="1"/>
        <end position="21"/>
    </location>
</feature>
<feature type="compositionally biased region" description="Basic residues" evidence="2">
    <location>
        <begin position="1"/>
        <end position="15"/>
    </location>
</feature>
<sequence>MARPTKKSGPRKQKRNVPSGVAHIQSTFNNTIVSIADPAGEVISWASAGSSGFKGAKKGTPFAAQTAAEAAARRAIDQGMRQLEVMVSGPGSGRETAIRALQSAGLEITLIRDVTPIPHNGCRPPKRRRV</sequence>